<protein>
    <recommendedName>
        <fullName evidence="1">Cell division protein SepF</fullName>
    </recommendedName>
</protein>
<comment type="function">
    <text evidence="1">Cell division protein that is part of the divisome complex and is recruited early to the Z-ring. Probably stimulates Z-ring formation, perhaps through the cross-linking of FtsZ protofilaments. Its function overlaps with FtsA.</text>
</comment>
<comment type="subunit">
    <text evidence="1">Homodimer. Interacts with FtsZ.</text>
</comment>
<comment type="subcellular location">
    <subcellularLocation>
        <location evidence="1">Cytoplasm</location>
    </subcellularLocation>
    <text evidence="1">Localizes to the division site, in a FtsZ-dependent manner.</text>
</comment>
<comment type="similarity">
    <text evidence="1">Belongs to the SepF family.</text>
</comment>
<keyword id="KW-0131">Cell cycle</keyword>
<keyword id="KW-0132">Cell division</keyword>
<keyword id="KW-0963">Cytoplasm</keyword>
<keyword id="KW-1185">Reference proteome</keyword>
<keyword id="KW-0717">Septation</keyword>
<gene>
    <name evidence="1" type="primary">sepF</name>
    <name type="ordered locus">SynRCC307_0470</name>
</gene>
<reference key="1">
    <citation type="submission" date="2006-05" db="EMBL/GenBank/DDBJ databases">
        <authorList>
            <consortium name="Genoscope"/>
        </authorList>
    </citation>
    <scope>NUCLEOTIDE SEQUENCE [LARGE SCALE GENOMIC DNA]</scope>
    <source>
        <strain>RCC307</strain>
    </source>
</reference>
<organism>
    <name type="scientific">Synechococcus sp. (strain RCC307)</name>
    <dbReference type="NCBI Taxonomy" id="316278"/>
    <lineage>
        <taxon>Bacteria</taxon>
        <taxon>Bacillati</taxon>
        <taxon>Cyanobacteriota</taxon>
        <taxon>Cyanophyceae</taxon>
        <taxon>Synechococcales</taxon>
        <taxon>Synechococcaceae</taxon>
        <taxon>Synechococcus</taxon>
    </lineage>
</organism>
<name>SEPF_SYNR3</name>
<feature type="chain" id="PRO_0000334129" description="Cell division protein SepF">
    <location>
        <begin position="1"/>
        <end position="183"/>
    </location>
</feature>
<feature type="region of interest" description="Disordered" evidence="2">
    <location>
        <begin position="149"/>
        <end position="183"/>
    </location>
</feature>
<evidence type="ECO:0000255" key="1">
    <source>
        <dbReference type="HAMAP-Rule" id="MF_01197"/>
    </source>
</evidence>
<evidence type="ECO:0000256" key="2">
    <source>
        <dbReference type="SAM" id="MobiDB-lite"/>
    </source>
</evidence>
<proteinExistence type="inferred from homology"/>
<sequence length="183" mass="19428">MSIFSRLKKVVAGDDYLDDDYGTELEYEDGLEPSDSTLDRGGAIAPIGSFDDGDPFASSNVIGMPGITSAAAEVLVMEPRSFDEMPKTIQALRERKTIILNLTMMEPDQAQRAVDFVAGGTYAIDGHQERVGESIFLFAPSCVTVTTASSEESAAPSVMAREEEATAPAAPSPAWGTQDAING</sequence>
<dbReference type="EMBL" id="CT978603">
    <property type="protein sequence ID" value="CAK27373.1"/>
    <property type="molecule type" value="Genomic_DNA"/>
</dbReference>
<dbReference type="SMR" id="A5GR64"/>
<dbReference type="STRING" id="316278.SynRCC307_0470"/>
<dbReference type="KEGG" id="syr:SynRCC307_0470"/>
<dbReference type="eggNOG" id="COG1799">
    <property type="taxonomic scope" value="Bacteria"/>
</dbReference>
<dbReference type="HOGENOM" id="CLU_078499_1_0_3"/>
<dbReference type="OrthoDB" id="9815206at2"/>
<dbReference type="Proteomes" id="UP000001115">
    <property type="component" value="Chromosome"/>
</dbReference>
<dbReference type="GO" id="GO:0005737">
    <property type="term" value="C:cytoplasm"/>
    <property type="evidence" value="ECO:0007669"/>
    <property type="project" value="UniProtKB-SubCell"/>
</dbReference>
<dbReference type="GO" id="GO:0000917">
    <property type="term" value="P:division septum assembly"/>
    <property type="evidence" value="ECO:0007669"/>
    <property type="project" value="UniProtKB-KW"/>
</dbReference>
<dbReference type="GO" id="GO:0043093">
    <property type="term" value="P:FtsZ-dependent cytokinesis"/>
    <property type="evidence" value="ECO:0007669"/>
    <property type="project" value="UniProtKB-UniRule"/>
</dbReference>
<dbReference type="Gene3D" id="3.30.110.150">
    <property type="entry name" value="SepF-like protein"/>
    <property type="match status" value="1"/>
</dbReference>
<dbReference type="HAMAP" id="MF_01197">
    <property type="entry name" value="SepF"/>
    <property type="match status" value="1"/>
</dbReference>
<dbReference type="InterPro" id="IPR023052">
    <property type="entry name" value="Cell_div_SepF"/>
</dbReference>
<dbReference type="InterPro" id="IPR007561">
    <property type="entry name" value="Cell_div_SepF/SepF-rel"/>
</dbReference>
<dbReference type="InterPro" id="IPR038594">
    <property type="entry name" value="SepF-like_sf"/>
</dbReference>
<dbReference type="PANTHER" id="PTHR35798">
    <property type="entry name" value="CELL DIVISION PROTEIN SEPF"/>
    <property type="match status" value="1"/>
</dbReference>
<dbReference type="PANTHER" id="PTHR35798:SF1">
    <property type="entry name" value="CELL DIVISION PROTEIN SEPF"/>
    <property type="match status" value="1"/>
</dbReference>
<dbReference type="Pfam" id="PF04472">
    <property type="entry name" value="SepF"/>
    <property type="match status" value="1"/>
</dbReference>
<accession>A5GR64</accession>